<feature type="chain" id="PRO_0000227781" description="Leucine-rich repeat-containing protein 57">
    <location>
        <begin position="1"/>
        <end position="238"/>
    </location>
</feature>
<feature type="repeat" description="LRR 1">
    <location>
        <begin position="10"/>
        <end position="36"/>
    </location>
</feature>
<feature type="repeat" description="LRR 2">
    <location>
        <begin position="37"/>
        <end position="62"/>
    </location>
</feature>
<feature type="repeat" description="LRR 3">
    <location>
        <begin position="64"/>
        <end position="82"/>
    </location>
</feature>
<feature type="repeat" description="LRR 4">
    <location>
        <begin position="83"/>
        <end position="106"/>
    </location>
</feature>
<feature type="repeat" description="LRR 5">
    <location>
        <begin position="108"/>
        <end position="128"/>
    </location>
</feature>
<feature type="repeat" description="LRR 6">
    <location>
        <begin position="129"/>
        <end position="152"/>
    </location>
</feature>
<feature type="repeat" description="LRR 7">
    <location>
        <begin position="154"/>
        <end position="173"/>
    </location>
</feature>
<feature type="repeat" description="LRR 8">
    <location>
        <begin position="174"/>
        <end position="199"/>
    </location>
</feature>
<proteinExistence type="evidence at transcript level"/>
<keyword id="KW-0433">Leucine-rich repeat</keyword>
<keyword id="KW-1185">Reference proteome</keyword>
<keyword id="KW-0677">Repeat</keyword>
<dbReference type="EMBL" id="BC075955">
    <property type="protein sequence ID" value="AAH75955.1"/>
    <property type="molecule type" value="mRNA"/>
</dbReference>
<dbReference type="RefSeq" id="NP_001002627.1">
    <property type="nucleotide sequence ID" value="NM_001002627.1"/>
</dbReference>
<dbReference type="SMR" id="Q6DHL5"/>
<dbReference type="FunCoup" id="Q6DHL5">
    <property type="interactions" value="1216"/>
</dbReference>
<dbReference type="STRING" id="7955.ENSDARP00000064514"/>
<dbReference type="PaxDb" id="7955-ENSDARP00000102822"/>
<dbReference type="Ensembl" id="ENSDART00000064515">
    <property type="protein sequence ID" value="ENSDARP00000064514"/>
    <property type="gene ID" value="ENSDARG00000043938"/>
</dbReference>
<dbReference type="GeneID" id="436900"/>
<dbReference type="KEGG" id="dre:436900"/>
<dbReference type="AGR" id="ZFIN:ZDB-GENE-040718-372"/>
<dbReference type="CTD" id="255252"/>
<dbReference type="ZFIN" id="ZDB-GENE-040718-372">
    <property type="gene designation" value="lrrc57"/>
</dbReference>
<dbReference type="eggNOG" id="KOG0619">
    <property type="taxonomic scope" value="Eukaryota"/>
</dbReference>
<dbReference type="InParanoid" id="Q6DHL5"/>
<dbReference type="OMA" id="AYMERYT"/>
<dbReference type="OrthoDB" id="1728874at2759"/>
<dbReference type="PhylomeDB" id="Q6DHL5"/>
<dbReference type="TreeFam" id="TF326481"/>
<dbReference type="PRO" id="PR:Q6DHL5"/>
<dbReference type="Proteomes" id="UP000000437">
    <property type="component" value="Chromosome 17"/>
</dbReference>
<dbReference type="Bgee" id="ENSDARG00000043938">
    <property type="expression patterns" value="Expressed in testis and 21 other cell types or tissues"/>
</dbReference>
<dbReference type="ExpressionAtlas" id="Q6DHL5">
    <property type="expression patterns" value="baseline"/>
</dbReference>
<dbReference type="FunFam" id="3.80.10.10:FF:000458">
    <property type="entry name" value="Leucine rich repeat containing 57"/>
    <property type="match status" value="1"/>
</dbReference>
<dbReference type="FunFam" id="3.80.10.10:FF:000230">
    <property type="entry name" value="Leucine-rich repeat-containing protein 57"/>
    <property type="match status" value="1"/>
</dbReference>
<dbReference type="Gene3D" id="3.80.10.10">
    <property type="entry name" value="Ribonuclease Inhibitor"/>
    <property type="match status" value="2"/>
</dbReference>
<dbReference type="InterPro" id="IPR001611">
    <property type="entry name" value="Leu-rich_rpt"/>
</dbReference>
<dbReference type="InterPro" id="IPR003591">
    <property type="entry name" value="Leu-rich_rpt_typical-subtyp"/>
</dbReference>
<dbReference type="InterPro" id="IPR032675">
    <property type="entry name" value="LRR_dom_sf"/>
</dbReference>
<dbReference type="InterPro" id="IPR050216">
    <property type="entry name" value="LRR_domain-containing"/>
</dbReference>
<dbReference type="InterPro" id="IPR055414">
    <property type="entry name" value="LRR_R13L4/SHOC2-like"/>
</dbReference>
<dbReference type="PANTHER" id="PTHR48051">
    <property type="match status" value="1"/>
</dbReference>
<dbReference type="PANTHER" id="PTHR48051:SF62">
    <property type="entry name" value="LEUCINE-RICH REPEAT-CONTAINING PROTEIN 57"/>
    <property type="match status" value="1"/>
</dbReference>
<dbReference type="Pfam" id="PF23598">
    <property type="entry name" value="LRR_14"/>
    <property type="match status" value="1"/>
</dbReference>
<dbReference type="PRINTS" id="PR00019">
    <property type="entry name" value="LEURICHRPT"/>
</dbReference>
<dbReference type="SMART" id="SM00364">
    <property type="entry name" value="LRR_BAC"/>
    <property type="match status" value="4"/>
</dbReference>
<dbReference type="SMART" id="SM00369">
    <property type="entry name" value="LRR_TYP"/>
    <property type="match status" value="5"/>
</dbReference>
<dbReference type="SUPFAM" id="SSF52058">
    <property type="entry name" value="L domain-like"/>
    <property type="match status" value="1"/>
</dbReference>
<dbReference type="PROSITE" id="PS51450">
    <property type="entry name" value="LRR"/>
    <property type="match status" value="7"/>
</dbReference>
<organism>
    <name type="scientific">Danio rerio</name>
    <name type="common">Zebrafish</name>
    <name type="synonym">Brachydanio rerio</name>
    <dbReference type="NCBI Taxonomy" id="7955"/>
    <lineage>
        <taxon>Eukaryota</taxon>
        <taxon>Metazoa</taxon>
        <taxon>Chordata</taxon>
        <taxon>Craniata</taxon>
        <taxon>Vertebrata</taxon>
        <taxon>Euteleostomi</taxon>
        <taxon>Actinopterygii</taxon>
        <taxon>Neopterygii</taxon>
        <taxon>Teleostei</taxon>
        <taxon>Ostariophysi</taxon>
        <taxon>Cypriniformes</taxon>
        <taxon>Danionidae</taxon>
        <taxon>Danioninae</taxon>
        <taxon>Danio</taxon>
    </lineage>
</organism>
<accession>Q6DHL5</accession>
<name>LRC57_DANRE</name>
<protein>
    <recommendedName>
        <fullName>Leucine-rich repeat-containing protein 57</fullName>
    </recommendedName>
</protein>
<sequence length="238" mass="26519">MGNSALKAHLETSQKTGVFQLTGKGLTEFPEDLQKLTANLRTVDLSNNKIEELPAFIGSFQHLKSFTISCNKLTSLPNDIGKLKKLETLILNGNQLKQLPSSIGQLKSLRTLSLSGNQFKEFPSGLGTLRQLDVLDLSKNQIRVVPAEVAELQAIEINLNQNQISSVTQEVSRTPRLKVLRLEENCLELSSIPLSILTDSQVSLLSVEGNLFEVKKMRDLEGYDKYMERFTATKKKFA</sequence>
<gene>
    <name type="primary">lrrc57</name>
    <name type="ORF">zgc:92240</name>
</gene>
<reference key="1">
    <citation type="submission" date="2004-07" db="EMBL/GenBank/DDBJ databases">
        <authorList>
            <consortium name="NIH - Zebrafish Gene Collection (ZGC) project"/>
        </authorList>
    </citation>
    <scope>NUCLEOTIDE SEQUENCE [LARGE SCALE MRNA]</scope>
</reference>